<feature type="chain" id="PRO_0000388827" description="UPF0756 membrane protein BCG9842_B0533">
    <location>
        <begin position="1"/>
        <end position="153"/>
    </location>
</feature>
<feature type="transmembrane region" description="Helical" evidence="1">
    <location>
        <begin position="8"/>
        <end position="28"/>
    </location>
</feature>
<feature type="transmembrane region" description="Helical" evidence="1">
    <location>
        <begin position="54"/>
        <end position="74"/>
    </location>
</feature>
<feature type="transmembrane region" description="Helical" evidence="1">
    <location>
        <begin position="87"/>
        <end position="107"/>
    </location>
</feature>
<feature type="transmembrane region" description="Helical" evidence="1">
    <location>
        <begin position="117"/>
        <end position="137"/>
    </location>
</feature>
<accession>B7IJZ3</accession>
<name>Y533_BACC2</name>
<comment type="subcellular location">
    <subcellularLocation>
        <location evidence="1">Cell membrane</location>
        <topology evidence="1">Multi-pass membrane protein</topology>
    </subcellularLocation>
</comment>
<comment type="similarity">
    <text evidence="1">Belongs to the UPF0756 family.</text>
</comment>
<sequence length="153" mass="15998">MISQSTLFLFILLIIGLIAKNQSLTVAIGVLFLLKFTFLGDKVFPYLQTKGINLGVTVITIAVLVPIATGEIGFKQLGEAAKSYYAWIALASGVAVALLAKGGVQLLTTDPHITTALVFGTIIAVALFNGVAVGPLIGAGIAYAVMSIIQMFK</sequence>
<evidence type="ECO:0000255" key="1">
    <source>
        <dbReference type="HAMAP-Rule" id="MF_01874"/>
    </source>
</evidence>
<proteinExistence type="inferred from homology"/>
<reference key="1">
    <citation type="submission" date="2008-10" db="EMBL/GenBank/DDBJ databases">
        <title>Genome sequence of Bacillus cereus G9842.</title>
        <authorList>
            <person name="Dodson R.J."/>
            <person name="Durkin A.S."/>
            <person name="Rosovitz M.J."/>
            <person name="Rasko D.A."/>
            <person name="Hoffmaster A."/>
            <person name="Ravel J."/>
            <person name="Sutton G."/>
        </authorList>
    </citation>
    <scope>NUCLEOTIDE SEQUENCE [LARGE SCALE GENOMIC DNA]</scope>
    <source>
        <strain>G9842</strain>
    </source>
</reference>
<protein>
    <recommendedName>
        <fullName evidence="1">UPF0756 membrane protein BCG9842_B0533</fullName>
    </recommendedName>
</protein>
<keyword id="KW-1003">Cell membrane</keyword>
<keyword id="KW-0472">Membrane</keyword>
<keyword id="KW-0812">Transmembrane</keyword>
<keyword id="KW-1133">Transmembrane helix</keyword>
<organism>
    <name type="scientific">Bacillus cereus (strain G9842)</name>
    <dbReference type="NCBI Taxonomy" id="405531"/>
    <lineage>
        <taxon>Bacteria</taxon>
        <taxon>Bacillati</taxon>
        <taxon>Bacillota</taxon>
        <taxon>Bacilli</taxon>
        <taxon>Bacillales</taxon>
        <taxon>Bacillaceae</taxon>
        <taxon>Bacillus</taxon>
        <taxon>Bacillus cereus group</taxon>
    </lineage>
</organism>
<gene>
    <name type="ordered locus">BCG9842_B0533</name>
</gene>
<dbReference type="EMBL" id="CP001186">
    <property type="protein sequence ID" value="ACK96015.1"/>
    <property type="molecule type" value="Genomic_DNA"/>
</dbReference>
<dbReference type="RefSeq" id="WP_000625507.1">
    <property type="nucleotide sequence ID" value="NC_011772.1"/>
</dbReference>
<dbReference type="KEGG" id="bcg:BCG9842_B0533"/>
<dbReference type="HOGENOM" id="CLU_125889_1_0_9"/>
<dbReference type="Proteomes" id="UP000006744">
    <property type="component" value="Chromosome"/>
</dbReference>
<dbReference type="GO" id="GO:0005886">
    <property type="term" value="C:plasma membrane"/>
    <property type="evidence" value="ECO:0007669"/>
    <property type="project" value="UniProtKB-SubCell"/>
</dbReference>
<dbReference type="HAMAP" id="MF_01874">
    <property type="entry name" value="UPF0756"/>
    <property type="match status" value="1"/>
</dbReference>
<dbReference type="InterPro" id="IPR007382">
    <property type="entry name" value="UPF0756_TM"/>
</dbReference>
<dbReference type="PANTHER" id="PTHR38452">
    <property type="entry name" value="UPF0756 MEMBRANE PROTEIN YEAL"/>
    <property type="match status" value="1"/>
</dbReference>
<dbReference type="PANTHER" id="PTHR38452:SF1">
    <property type="entry name" value="UPF0756 MEMBRANE PROTEIN YEAL"/>
    <property type="match status" value="1"/>
</dbReference>
<dbReference type="Pfam" id="PF04284">
    <property type="entry name" value="DUF441"/>
    <property type="match status" value="1"/>
</dbReference>